<gene>
    <name evidence="1" type="primary">folD</name>
    <name type="ordered locus">Ava_2703</name>
</gene>
<comment type="function">
    <text evidence="1">Catalyzes the oxidation of 5,10-methylenetetrahydrofolate to 5,10-methenyltetrahydrofolate and then the hydrolysis of 5,10-methenyltetrahydrofolate to 10-formyltetrahydrofolate.</text>
</comment>
<comment type="catalytic activity">
    <reaction evidence="1">
        <text>(6R)-5,10-methylene-5,6,7,8-tetrahydrofolate + NADP(+) = (6R)-5,10-methenyltetrahydrofolate + NADPH</text>
        <dbReference type="Rhea" id="RHEA:22812"/>
        <dbReference type="ChEBI" id="CHEBI:15636"/>
        <dbReference type="ChEBI" id="CHEBI:57455"/>
        <dbReference type="ChEBI" id="CHEBI:57783"/>
        <dbReference type="ChEBI" id="CHEBI:58349"/>
        <dbReference type="EC" id="1.5.1.5"/>
    </reaction>
</comment>
<comment type="catalytic activity">
    <reaction evidence="1">
        <text>(6R)-5,10-methenyltetrahydrofolate + H2O = (6R)-10-formyltetrahydrofolate + H(+)</text>
        <dbReference type="Rhea" id="RHEA:23700"/>
        <dbReference type="ChEBI" id="CHEBI:15377"/>
        <dbReference type="ChEBI" id="CHEBI:15378"/>
        <dbReference type="ChEBI" id="CHEBI:57455"/>
        <dbReference type="ChEBI" id="CHEBI:195366"/>
        <dbReference type="EC" id="3.5.4.9"/>
    </reaction>
</comment>
<comment type="pathway">
    <text evidence="1">One-carbon metabolism; tetrahydrofolate interconversion.</text>
</comment>
<comment type="subunit">
    <text evidence="1">Homodimer.</text>
</comment>
<comment type="similarity">
    <text evidence="1">Belongs to the tetrahydrofolate dehydrogenase/cyclohydrolase family.</text>
</comment>
<evidence type="ECO:0000255" key="1">
    <source>
        <dbReference type="HAMAP-Rule" id="MF_01576"/>
    </source>
</evidence>
<proteinExistence type="inferred from homology"/>
<feature type="chain" id="PRO_0000268258" description="Bifunctional protein FolD">
    <location>
        <begin position="1"/>
        <end position="299"/>
    </location>
</feature>
<feature type="binding site" evidence="1">
    <location>
        <begin position="169"/>
        <end position="171"/>
    </location>
    <ligand>
        <name>NADP(+)</name>
        <dbReference type="ChEBI" id="CHEBI:58349"/>
    </ligand>
</feature>
<feature type="binding site" evidence="1">
    <location>
        <position position="194"/>
    </location>
    <ligand>
        <name>NADP(+)</name>
        <dbReference type="ChEBI" id="CHEBI:58349"/>
    </ligand>
</feature>
<feature type="binding site" evidence="1">
    <location>
        <position position="235"/>
    </location>
    <ligand>
        <name>NADP(+)</name>
        <dbReference type="ChEBI" id="CHEBI:58349"/>
    </ligand>
</feature>
<keyword id="KW-0028">Amino-acid biosynthesis</keyword>
<keyword id="KW-0368">Histidine biosynthesis</keyword>
<keyword id="KW-0378">Hydrolase</keyword>
<keyword id="KW-0486">Methionine biosynthesis</keyword>
<keyword id="KW-0511">Multifunctional enzyme</keyword>
<keyword id="KW-0521">NADP</keyword>
<keyword id="KW-0554">One-carbon metabolism</keyword>
<keyword id="KW-0560">Oxidoreductase</keyword>
<keyword id="KW-0658">Purine biosynthesis</keyword>
<reference key="1">
    <citation type="journal article" date="2014" name="Stand. Genomic Sci.">
        <title>Complete genome sequence of Anabaena variabilis ATCC 29413.</title>
        <authorList>
            <person name="Thiel T."/>
            <person name="Pratte B.S."/>
            <person name="Zhong J."/>
            <person name="Goodwin L."/>
            <person name="Copeland A."/>
            <person name="Lucas S."/>
            <person name="Han C."/>
            <person name="Pitluck S."/>
            <person name="Land M.L."/>
            <person name="Kyrpides N.C."/>
            <person name="Woyke T."/>
        </authorList>
    </citation>
    <scope>NUCLEOTIDE SEQUENCE [LARGE SCALE GENOMIC DNA]</scope>
    <source>
        <strain>ATCC 29413 / PCC 7937</strain>
    </source>
</reference>
<dbReference type="EC" id="1.5.1.5" evidence="1"/>
<dbReference type="EC" id="3.5.4.9" evidence="1"/>
<dbReference type="EMBL" id="CP000117">
    <property type="protein sequence ID" value="ABA22316.1"/>
    <property type="molecule type" value="Genomic_DNA"/>
</dbReference>
<dbReference type="SMR" id="Q3M9M0"/>
<dbReference type="STRING" id="240292.Ava_2703"/>
<dbReference type="KEGG" id="ava:Ava_2703"/>
<dbReference type="eggNOG" id="COG0190">
    <property type="taxonomic scope" value="Bacteria"/>
</dbReference>
<dbReference type="HOGENOM" id="CLU_034045_2_1_3"/>
<dbReference type="UniPathway" id="UPA00193"/>
<dbReference type="Proteomes" id="UP000002533">
    <property type="component" value="Chromosome"/>
</dbReference>
<dbReference type="GO" id="GO:0005829">
    <property type="term" value="C:cytosol"/>
    <property type="evidence" value="ECO:0007669"/>
    <property type="project" value="TreeGrafter"/>
</dbReference>
<dbReference type="GO" id="GO:0004477">
    <property type="term" value="F:methenyltetrahydrofolate cyclohydrolase activity"/>
    <property type="evidence" value="ECO:0007669"/>
    <property type="project" value="UniProtKB-UniRule"/>
</dbReference>
<dbReference type="GO" id="GO:0004488">
    <property type="term" value="F:methylenetetrahydrofolate dehydrogenase (NADP+) activity"/>
    <property type="evidence" value="ECO:0007669"/>
    <property type="project" value="UniProtKB-UniRule"/>
</dbReference>
<dbReference type="GO" id="GO:0000105">
    <property type="term" value="P:L-histidine biosynthetic process"/>
    <property type="evidence" value="ECO:0007669"/>
    <property type="project" value="UniProtKB-KW"/>
</dbReference>
<dbReference type="GO" id="GO:0009086">
    <property type="term" value="P:methionine biosynthetic process"/>
    <property type="evidence" value="ECO:0007669"/>
    <property type="project" value="UniProtKB-KW"/>
</dbReference>
<dbReference type="GO" id="GO:0006164">
    <property type="term" value="P:purine nucleotide biosynthetic process"/>
    <property type="evidence" value="ECO:0007669"/>
    <property type="project" value="UniProtKB-KW"/>
</dbReference>
<dbReference type="GO" id="GO:0035999">
    <property type="term" value="P:tetrahydrofolate interconversion"/>
    <property type="evidence" value="ECO:0007669"/>
    <property type="project" value="UniProtKB-UniRule"/>
</dbReference>
<dbReference type="CDD" id="cd01080">
    <property type="entry name" value="NAD_bind_m-THF_DH_Cyclohyd"/>
    <property type="match status" value="1"/>
</dbReference>
<dbReference type="FunFam" id="3.40.50.720:FF:000094">
    <property type="entry name" value="Bifunctional protein FolD"/>
    <property type="match status" value="1"/>
</dbReference>
<dbReference type="FunFam" id="3.40.50.10860:FF:000005">
    <property type="entry name" value="C-1-tetrahydrofolate synthase, cytoplasmic, putative"/>
    <property type="match status" value="1"/>
</dbReference>
<dbReference type="Gene3D" id="3.40.50.10860">
    <property type="entry name" value="Leucine Dehydrogenase, chain A, domain 1"/>
    <property type="match status" value="1"/>
</dbReference>
<dbReference type="Gene3D" id="3.40.50.720">
    <property type="entry name" value="NAD(P)-binding Rossmann-like Domain"/>
    <property type="match status" value="1"/>
</dbReference>
<dbReference type="HAMAP" id="MF_01576">
    <property type="entry name" value="THF_DHG_CYH"/>
    <property type="match status" value="1"/>
</dbReference>
<dbReference type="InterPro" id="IPR046346">
    <property type="entry name" value="Aminoacid_DH-like_N_sf"/>
</dbReference>
<dbReference type="InterPro" id="IPR036291">
    <property type="entry name" value="NAD(P)-bd_dom_sf"/>
</dbReference>
<dbReference type="InterPro" id="IPR000672">
    <property type="entry name" value="THF_DH/CycHdrlase"/>
</dbReference>
<dbReference type="InterPro" id="IPR020630">
    <property type="entry name" value="THF_DH/CycHdrlase_cat_dom"/>
</dbReference>
<dbReference type="InterPro" id="IPR020867">
    <property type="entry name" value="THF_DH/CycHdrlase_CS"/>
</dbReference>
<dbReference type="InterPro" id="IPR020631">
    <property type="entry name" value="THF_DH/CycHdrlase_NAD-bd_dom"/>
</dbReference>
<dbReference type="NCBIfam" id="NF008058">
    <property type="entry name" value="PRK10792.1"/>
    <property type="match status" value="1"/>
</dbReference>
<dbReference type="NCBIfam" id="NF010783">
    <property type="entry name" value="PRK14186.1"/>
    <property type="match status" value="1"/>
</dbReference>
<dbReference type="PANTHER" id="PTHR48099:SF5">
    <property type="entry name" value="C-1-TETRAHYDROFOLATE SYNTHASE, CYTOPLASMIC"/>
    <property type="match status" value="1"/>
</dbReference>
<dbReference type="PANTHER" id="PTHR48099">
    <property type="entry name" value="C-1-TETRAHYDROFOLATE SYNTHASE, CYTOPLASMIC-RELATED"/>
    <property type="match status" value="1"/>
</dbReference>
<dbReference type="Pfam" id="PF00763">
    <property type="entry name" value="THF_DHG_CYH"/>
    <property type="match status" value="1"/>
</dbReference>
<dbReference type="Pfam" id="PF02882">
    <property type="entry name" value="THF_DHG_CYH_C"/>
    <property type="match status" value="1"/>
</dbReference>
<dbReference type="PRINTS" id="PR00085">
    <property type="entry name" value="THFDHDRGNASE"/>
</dbReference>
<dbReference type="SUPFAM" id="SSF53223">
    <property type="entry name" value="Aminoacid dehydrogenase-like, N-terminal domain"/>
    <property type="match status" value="1"/>
</dbReference>
<dbReference type="SUPFAM" id="SSF51735">
    <property type="entry name" value="NAD(P)-binding Rossmann-fold domains"/>
    <property type="match status" value="1"/>
</dbReference>
<dbReference type="PROSITE" id="PS00767">
    <property type="entry name" value="THF_DHG_CYH_2"/>
    <property type="match status" value="1"/>
</dbReference>
<protein>
    <recommendedName>
        <fullName evidence="1">Bifunctional protein FolD</fullName>
    </recommendedName>
    <domain>
        <recommendedName>
            <fullName evidence="1">Methylenetetrahydrofolate dehydrogenase</fullName>
            <ecNumber evidence="1">1.5.1.5</ecNumber>
        </recommendedName>
    </domain>
    <domain>
        <recommendedName>
            <fullName evidence="1">Methenyltetrahydrofolate cyclohydrolase</fullName>
            <ecNumber evidence="1">3.5.4.9</ecNumber>
        </recommendedName>
    </domain>
</protein>
<name>FOLD_TRIV2</name>
<sequence length="299" mass="31583">METKTAKILDGKTLAEKIQKELTAQIIEVQAKIGRPPGLAVLMVGDNPASAAYVRNKEKSCAKVGIASFGKHFPQETSQKELEDVIAALNQDEQVDGILVQLPLPEHLDAVKLLHQIEPDKDADGLHPVNLGRLVRGEKGLRSCTPAGVMRLLAEYEISLRGKQAVVVGRSILVGKPMALMLLEADATVTIAHSRSQDLKSITQNADILVAAAGLPGLITADMVKPGAVVVDVGINRVTDANGKSRLVGDINFASIAGVAEYITPVPGGIGPMTVALLLQNTVTSYLQTAKESGALDVK</sequence>
<organism>
    <name type="scientific">Trichormus variabilis (strain ATCC 29413 / PCC 7937)</name>
    <name type="common">Anabaena variabilis</name>
    <dbReference type="NCBI Taxonomy" id="240292"/>
    <lineage>
        <taxon>Bacteria</taxon>
        <taxon>Bacillati</taxon>
        <taxon>Cyanobacteriota</taxon>
        <taxon>Cyanophyceae</taxon>
        <taxon>Nostocales</taxon>
        <taxon>Nostocaceae</taxon>
        <taxon>Trichormus</taxon>
    </lineage>
</organism>
<accession>Q3M9M0</accession>